<name>HIS6_HYDS0</name>
<feature type="chain" id="PRO_1000135009" description="Imidazole glycerol phosphate synthase subunit HisF">
    <location>
        <begin position="1"/>
        <end position="252"/>
    </location>
</feature>
<feature type="active site" evidence="1">
    <location>
        <position position="11"/>
    </location>
</feature>
<feature type="active site" evidence="1">
    <location>
        <position position="130"/>
    </location>
</feature>
<gene>
    <name evidence="1" type="primary">hisF</name>
    <name type="ordered locus">HY04AAS1_0445</name>
</gene>
<reference key="1">
    <citation type="journal article" date="2009" name="J. Bacteriol.">
        <title>Complete and draft genome sequences of six members of the Aquificales.</title>
        <authorList>
            <person name="Reysenbach A.-L."/>
            <person name="Hamamura N."/>
            <person name="Podar M."/>
            <person name="Griffiths E."/>
            <person name="Ferreira S."/>
            <person name="Hochstein R."/>
            <person name="Heidelberg J."/>
            <person name="Johnson J."/>
            <person name="Mead D."/>
            <person name="Pohorille A."/>
            <person name="Sarmiento M."/>
            <person name="Schweighofer K."/>
            <person name="Seshadri R."/>
            <person name="Voytek M.A."/>
        </authorList>
    </citation>
    <scope>NUCLEOTIDE SEQUENCE [LARGE SCALE GENOMIC DNA]</scope>
    <source>
        <strain>Y04AAS1</strain>
    </source>
</reference>
<comment type="function">
    <text evidence="1">IGPS catalyzes the conversion of PRFAR and glutamine to IGP, AICAR and glutamate. The HisF subunit catalyzes the cyclization activity that produces IGP and AICAR from PRFAR using the ammonia provided by the HisH subunit.</text>
</comment>
<comment type="catalytic activity">
    <reaction evidence="1">
        <text>5-[(5-phospho-1-deoxy-D-ribulos-1-ylimino)methylamino]-1-(5-phospho-beta-D-ribosyl)imidazole-4-carboxamide + L-glutamine = D-erythro-1-(imidazol-4-yl)glycerol 3-phosphate + 5-amino-1-(5-phospho-beta-D-ribosyl)imidazole-4-carboxamide + L-glutamate + H(+)</text>
        <dbReference type="Rhea" id="RHEA:24793"/>
        <dbReference type="ChEBI" id="CHEBI:15378"/>
        <dbReference type="ChEBI" id="CHEBI:29985"/>
        <dbReference type="ChEBI" id="CHEBI:58278"/>
        <dbReference type="ChEBI" id="CHEBI:58359"/>
        <dbReference type="ChEBI" id="CHEBI:58475"/>
        <dbReference type="ChEBI" id="CHEBI:58525"/>
        <dbReference type="EC" id="4.3.2.10"/>
    </reaction>
</comment>
<comment type="pathway">
    <text evidence="1">Amino-acid biosynthesis; L-histidine biosynthesis; L-histidine from 5-phospho-alpha-D-ribose 1-diphosphate: step 5/9.</text>
</comment>
<comment type="subunit">
    <text evidence="1">Heterodimer of HisH and HisF.</text>
</comment>
<comment type="subcellular location">
    <subcellularLocation>
        <location evidence="1">Cytoplasm</location>
    </subcellularLocation>
</comment>
<comment type="similarity">
    <text evidence="1">Belongs to the HisA/HisF family.</text>
</comment>
<organism>
    <name type="scientific">Hydrogenobaculum sp. (strain Y04AAS1)</name>
    <dbReference type="NCBI Taxonomy" id="380749"/>
    <lineage>
        <taxon>Bacteria</taxon>
        <taxon>Pseudomonadati</taxon>
        <taxon>Aquificota</taxon>
        <taxon>Aquificia</taxon>
        <taxon>Aquificales</taxon>
        <taxon>Aquificaceae</taxon>
        <taxon>Hydrogenobaculum</taxon>
    </lineage>
</organism>
<dbReference type="EC" id="4.3.2.10" evidence="1"/>
<dbReference type="EMBL" id="CP001130">
    <property type="protein sequence ID" value="ACG57135.1"/>
    <property type="molecule type" value="Genomic_DNA"/>
</dbReference>
<dbReference type="RefSeq" id="WP_012513491.1">
    <property type="nucleotide sequence ID" value="NC_011126.1"/>
</dbReference>
<dbReference type="SMR" id="B4U7M4"/>
<dbReference type="STRING" id="380749.HY04AAS1_0445"/>
<dbReference type="KEGG" id="hya:HY04AAS1_0445"/>
<dbReference type="eggNOG" id="COG0107">
    <property type="taxonomic scope" value="Bacteria"/>
</dbReference>
<dbReference type="HOGENOM" id="CLU_048577_4_0_0"/>
<dbReference type="OrthoDB" id="9781903at2"/>
<dbReference type="UniPathway" id="UPA00031">
    <property type="reaction ID" value="UER00010"/>
</dbReference>
<dbReference type="GO" id="GO:0005737">
    <property type="term" value="C:cytoplasm"/>
    <property type="evidence" value="ECO:0007669"/>
    <property type="project" value="UniProtKB-SubCell"/>
</dbReference>
<dbReference type="GO" id="GO:0000107">
    <property type="term" value="F:imidazoleglycerol-phosphate synthase activity"/>
    <property type="evidence" value="ECO:0007669"/>
    <property type="project" value="UniProtKB-UniRule"/>
</dbReference>
<dbReference type="GO" id="GO:0016829">
    <property type="term" value="F:lyase activity"/>
    <property type="evidence" value="ECO:0007669"/>
    <property type="project" value="UniProtKB-KW"/>
</dbReference>
<dbReference type="GO" id="GO:0000105">
    <property type="term" value="P:L-histidine biosynthetic process"/>
    <property type="evidence" value="ECO:0007669"/>
    <property type="project" value="UniProtKB-UniRule"/>
</dbReference>
<dbReference type="CDD" id="cd04731">
    <property type="entry name" value="HisF"/>
    <property type="match status" value="1"/>
</dbReference>
<dbReference type="FunFam" id="3.20.20.70:FF:000006">
    <property type="entry name" value="Imidazole glycerol phosphate synthase subunit HisF"/>
    <property type="match status" value="1"/>
</dbReference>
<dbReference type="Gene3D" id="3.20.20.70">
    <property type="entry name" value="Aldolase class I"/>
    <property type="match status" value="1"/>
</dbReference>
<dbReference type="HAMAP" id="MF_01013">
    <property type="entry name" value="HisF"/>
    <property type="match status" value="1"/>
</dbReference>
<dbReference type="InterPro" id="IPR013785">
    <property type="entry name" value="Aldolase_TIM"/>
</dbReference>
<dbReference type="InterPro" id="IPR006062">
    <property type="entry name" value="His_biosynth"/>
</dbReference>
<dbReference type="InterPro" id="IPR004651">
    <property type="entry name" value="HisF"/>
</dbReference>
<dbReference type="InterPro" id="IPR050064">
    <property type="entry name" value="IGPS_HisA/HisF"/>
</dbReference>
<dbReference type="InterPro" id="IPR011060">
    <property type="entry name" value="RibuloseP-bd_barrel"/>
</dbReference>
<dbReference type="NCBIfam" id="TIGR00735">
    <property type="entry name" value="hisF"/>
    <property type="match status" value="1"/>
</dbReference>
<dbReference type="PANTHER" id="PTHR21235:SF2">
    <property type="entry name" value="IMIDAZOLE GLYCEROL PHOSPHATE SYNTHASE HISHF"/>
    <property type="match status" value="1"/>
</dbReference>
<dbReference type="PANTHER" id="PTHR21235">
    <property type="entry name" value="IMIDAZOLE GLYCEROL PHOSPHATE SYNTHASE SUBUNIT HISF/H IGP SYNTHASE SUBUNIT HISF/H"/>
    <property type="match status" value="1"/>
</dbReference>
<dbReference type="Pfam" id="PF00977">
    <property type="entry name" value="His_biosynth"/>
    <property type="match status" value="1"/>
</dbReference>
<dbReference type="SUPFAM" id="SSF51366">
    <property type="entry name" value="Ribulose-phoshate binding barrel"/>
    <property type="match status" value="1"/>
</dbReference>
<evidence type="ECO:0000255" key="1">
    <source>
        <dbReference type="HAMAP-Rule" id="MF_01013"/>
    </source>
</evidence>
<keyword id="KW-0028">Amino-acid biosynthesis</keyword>
<keyword id="KW-0963">Cytoplasm</keyword>
<keyword id="KW-0368">Histidine biosynthesis</keyword>
<keyword id="KW-0456">Lyase</keyword>
<proteinExistence type="inferred from homology"/>
<protein>
    <recommendedName>
        <fullName evidence="1">Imidazole glycerol phosphate synthase subunit HisF</fullName>
        <ecNumber evidence="1">4.3.2.10</ecNumber>
    </recommendedName>
    <alternativeName>
        <fullName evidence="1">IGP synthase cyclase subunit</fullName>
    </alternativeName>
    <alternativeName>
        <fullName evidence="1">IGP synthase subunit HisF</fullName>
    </alternativeName>
    <alternativeName>
        <fullName evidence="1">ImGP synthase subunit HisF</fullName>
        <shortName evidence="1">IGPS subunit HisF</shortName>
    </alternativeName>
</protein>
<sequence length="252" mass="27594">MLAKRIIPCLDIKDGRVVKGINFVDLKDAGDPVENAIVYEEQKADEIVFLDITASYEKRNTVIDLAKRVAQNIFTPFTIGGGIRTLDDIRKLLEAGADKVSINSAAVKNPQLIYESARKFGSQCIVVAIDAKHVEDDTWHVYINGGRLNTNLDAVEWAKQVESLGAGEILLTSIDKDGTKSGYDIKLTDLISKAVNIPVIASGGAGRKEHFLEAFKLTEASACLAASIFHFKKISIPALKAYLKENNVHVRI</sequence>
<accession>B4U7M4</accession>